<protein>
    <recommendedName>
        <fullName>Alcohol dehydrogenase 2</fullName>
        <ecNumber evidence="2">1.1.1.1</ecNumber>
    </recommendedName>
</protein>
<feature type="chain" id="PRO_0000160702" description="Alcohol dehydrogenase 2">
    <location>
        <begin position="1"/>
        <end position="380"/>
    </location>
</feature>
<feature type="binding site" evidence="2">
    <location>
        <position position="48"/>
    </location>
    <ligand>
        <name>Zn(2+)</name>
        <dbReference type="ChEBI" id="CHEBI:29105"/>
        <label>1</label>
        <note>catalytic</note>
    </ligand>
</feature>
<feature type="binding site" evidence="2">
    <location>
        <position position="50"/>
    </location>
    <ligand>
        <name>an alcohol</name>
        <dbReference type="ChEBI" id="CHEBI:30879"/>
    </ligand>
</feature>
<feature type="binding site" evidence="2">
    <location>
        <position position="50"/>
    </location>
    <ligand>
        <name>NAD(+)</name>
        <dbReference type="ChEBI" id="CHEBI:57540"/>
    </ligand>
</feature>
<feature type="binding site" evidence="2">
    <location>
        <position position="50"/>
    </location>
    <ligand>
        <name>Zn(2+)</name>
        <dbReference type="ChEBI" id="CHEBI:29105"/>
        <label>1</label>
        <note>catalytic</note>
    </ligand>
</feature>
<feature type="binding site" evidence="1">
    <location>
        <position position="70"/>
    </location>
    <ligand>
        <name>an alcohol</name>
        <dbReference type="ChEBI" id="CHEBI:30879"/>
    </ligand>
</feature>
<feature type="binding site" evidence="2">
    <location>
        <position position="70"/>
    </location>
    <ligand>
        <name>Zn(2+)</name>
        <dbReference type="ChEBI" id="CHEBI:29105"/>
        <label>1</label>
        <note>catalytic</note>
    </ligand>
</feature>
<feature type="binding site" evidence="2">
    <location>
        <position position="100"/>
    </location>
    <ligand>
        <name>Zn(2+)</name>
        <dbReference type="ChEBI" id="CHEBI:29105"/>
        <label>2</label>
    </ligand>
</feature>
<feature type="binding site" evidence="2">
    <location>
        <position position="103"/>
    </location>
    <ligand>
        <name>Zn(2+)</name>
        <dbReference type="ChEBI" id="CHEBI:29105"/>
        <label>2</label>
    </ligand>
</feature>
<feature type="binding site" evidence="2">
    <location>
        <position position="106"/>
    </location>
    <ligand>
        <name>Zn(2+)</name>
        <dbReference type="ChEBI" id="CHEBI:29105"/>
        <label>2</label>
    </ligand>
</feature>
<feature type="binding site" evidence="2">
    <location>
        <position position="114"/>
    </location>
    <ligand>
        <name>Zn(2+)</name>
        <dbReference type="ChEBI" id="CHEBI:29105"/>
        <label>2</label>
    </ligand>
</feature>
<feature type="binding site" evidence="2">
    <location>
        <position position="178"/>
    </location>
    <ligand>
        <name>Zn(2+)</name>
        <dbReference type="ChEBI" id="CHEBI:29105"/>
        <label>1</label>
        <note>catalytic</note>
    </ligand>
</feature>
<feature type="binding site" evidence="2">
    <location>
        <begin position="203"/>
        <end position="208"/>
    </location>
    <ligand>
        <name>NAD(+)</name>
        <dbReference type="ChEBI" id="CHEBI:57540"/>
    </ligand>
</feature>
<feature type="binding site" evidence="2">
    <location>
        <position position="227"/>
    </location>
    <ligand>
        <name>NAD(+)</name>
        <dbReference type="ChEBI" id="CHEBI:57540"/>
    </ligand>
</feature>
<feature type="binding site" evidence="2">
    <location>
        <position position="232"/>
    </location>
    <ligand>
        <name>NAD(+)</name>
        <dbReference type="ChEBI" id="CHEBI:57540"/>
    </ligand>
</feature>
<feature type="binding site" evidence="2">
    <location>
        <position position="273"/>
    </location>
    <ligand>
        <name>NAD(+)</name>
        <dbReference type="ChEBI" id="CHEBI:57540"/>
    </ligand>
</feature>
<feature type="binding site" evidence="1">
    <location>
        <begin position="296"/>
        <end position="298"/>
    </location>
    <ligand>
        <name>NAD(+)</name>
        <dbReference type="ChEBI" id="CHEBI:57540"/>
    </ligand>
</feature>
<feature type="binding site" evidence="2">
    <location>
        <position position="296"/>
    </location>
    <ligand>
        <name>NAD(+)</name>
        <dbReference type="ChEBI" id="CHEBI:57540"/>
    </ligand>
</feature>
<feature type="binding site" evidence="2">
    <location>
        <position position="323"/>
    </location>
    <ligand>
        <name>NAD(+)</name>
        <dbReference type="ChEBI" id="CHEBI:57540"/>
    </ligand>
</feature>
<feature type="binding site" evidence="2">
    <location>
        <position position="373"/>
    </location>
    <ligand>
        <name>NAD(+)</name>
        <dbReference type="ChEBI" id="CHEBI:57540"/>
    </ligand>
</feature>
<proteinExistence type="evidence at transcript level"/>
<gene>
    <name type="primary">ADH2</name>
</gene>
<organism>
    <name type="scientific">Solanum lycopersicum</name>
    <name type="common">Tomato</name>
    <name type="synonym">Lycopersicon esculentum</name>
    <dbReference type="NCBI Taxonomy" id="4081"/>
    <lineage>
        <taxon>Eukaryota</taxon>
        <taxon>Viridiplantae</taxon>
        <taxon>Streptophyta</taxon>
        <taxon>Embryophyta</taxon>
        <taxon>Tracheophyta</taxon>
        <taxon>Spermatophyta</taxon>
        <taxon>Magnoliopsida</taxon>
        <taxon>eudicotyledons</taxon>
        <taxon>Gunneridae</taxon>
        <taxon>Pentapetalae</taxon>
        <taxon>asterids</taxon>
        <taxon>lamiids</taxon>
        <taxon>Solanales</taxon>
        <taxon>Solanaceae</taxon>
        <taxon>Solanoideae</taxon>
        <taxon>Solaneae</taxon>
        <taxon>Solanum</taxon>
        <taxon>Solanum subgen. Lycopersicon</taxon>
    </lineage>
</organism>
<keyword id="KW-0963">Cytoplasm</keyword>
<keyword id="KW-0479">Metal-binding</keyword>
<keyword id="KW-0520">NAD</keyword>
<keyword id="KW-0560">Oxidoreductase</keyword>
<keyword id="KW-1185">Reference proteome</keyword>
<keyword id="KW-0862">Zinc</keyword>
<dbReference type="EC" id="1.1.1.1" evidence="2"/>
<dbReference type="EMBL" id="M86724">
    <property type="protein sequence ID" value="AAA34133.1"/>
    <property type="molecule type" value="mRNA"/>
</dbReference>
<dbReference type="EMBL" id="X77233">
    <property type="protein sequence ID" value="CAA54450.1"/>
    <property type="molecule type" value="Genomic_DNA"/>
</dbReference>
<dbReference type="EMBL" id="X60600">
    <property type="protein sequence ID" value="CAA43055.1"/>
    <property type="molecule type" value="mRNA"/>
</dbReference>
<dbReference type="PIR" id="S51826">
    <property type="entry name" value="S51826"/>
</dbReference>
<dbReference type="RefSeq" id="NP_001234099.1">
    <property type="nucleotide sequence ID" value="NM_001247170.2"/>
</dbReference>
<dbReference type="SMR" id="P28032"/>
<dbReference type="STRING" id="4081.P28032"/>
<dbReference type="PaxDb" id="4081-Solyc06g059740.2.1"/>
<dbReference type="GeneID" id="544074"/>
<dbReference type="KEGG" id="sly:544074"/>
<dbReference type="eggNOG" id="KOG0022">
    <property type="taxonomic scope" value="Eukaryota"/>
</dbReference>
<dbReference type="InParanoid" id="P28032"/>
<dbReference type="OrthoDB" id="417550at2759"/>
<dbReference type="Proteomes" id="UP000004994">
    <property type="component" value="Unplaced"/>
</dbReference>
<dbReference type="ExpressionAtlas" id="P28032">
    <property type="expression patterns" value="baseline and differential"/>
</dbReference>
<dbReference type="GO" id="GO:0005829">
    <property type="term" value="C:cytosol"/>
    <property type="evidence" value="ECO:0000318"/>
    <property type="project" value="GO_Central"/>
</dbReference>
<dbReference type="GO" id="GO:0004022">
    <property type="term" value="F:alcohol dehydrogenase (NAD+) activity"/>
    <property type="evidence" value="ECO:0000318"/>
    <property type="project" value="GO_Central"/>
</dbReference>
<dbReference type="GO" id="GO:0051903">
    <property type="term" value="F:S-(hydroxymethyl)glutathione dehydrogenase [NAD(P)+] activity"/>
    <property type="evidence" value="ECO:0000318"/>
    <property type="project" value="GO_Central"/>
</dbReference>
<dbReference type="GO" id="GO:0008270">
    <property type="term" value="F:zinc ion binding"/>
    <property type="evidence" value="ECO:0000318"/>
    <property type="project" value="GO_Central"/>
</dbReference>
<dbReference type="GO" id="GO:0009820">
    <property type="term" value="P:alkaloid metabolic process"/>
    <property type="evidence" value="ECO:0007669"/>
    <property type="project" value="UniProtKB-ARBA"/>
</dbReference>
<dbReference type="GO" id="GO:0046294">
    <property type="term" value="P:formaldehyde catabolic process"/>
    <property type="evidence" value="ECO:0000318"/>
    <property type="project" value="GO_Central"/>
</dbReference>
<dbReference type="CDD" id="cd08301">
    <property type="entry name" value="alcohol_DH_plants"/>
    <property type="match status" value="1"/>
</dbReference>
<dbReference type="FunFam" id="3.90.180.10:FF:000067">
    <property type="entry name" value="alcohol dehydrogenase 1-like isoform X1"/>
    <property type="match status" value="1"/>
</dbReference>
<dbReference type="FunFam" id="3.40.50.720:FF:001292">
    <property type="entry name" value="Alcohol dehydrogenase class-P"/>
    <property type="match status" value="1"/>
</dbReference>
<dbReference type="Gene3D" id="3.90.180.10">
    <property type="entry name" value="Medium-chain alcohol dehydrogenases, catalytic domain"/>
    <property type="match status" value="1"/>
</dbReference>
<dbReference type="Gene3D" id="3.40.50.720">
    <property type="entry name" value="NAD(P)-binding Rossmann-like Domain"/>
    <property type="match status" value="1"/>
</dbReference>
<dbReference type="InterPro" id="IPR013149">
    <property type="entry name" value="ADH-like_C"/>
</dbReference>
<dbReference type="InterPro" id="IPR013154">
    <property type="entry name" value="ADH-like_N"/>
</dbReference>
<dbReference type="InterPro" id="IPR002328">
    <property type="entry name" value="ADH_Zn_CS"/>
</dbReference>
<dbReference type="InterPro" id="IPR011032">
    <property type="entry name" value="GroES-like_sf"/>
</dbReference>
<dbReference type="InterPro" id="IPR036291">
    <property type="entry name" value="NAD(P)-bd_dom_sf"/>
</dbReference>
<dbReference type="PANTHER" id="PTHR43880">
    <property type="entry name" value="ALCOHOL DEHYDROGENASE"/>
    <property type="match status" value="1"/>
</dbReference>
<dbReference type="PANTHER" id="PTHR43880:SF40">
    <property type="entry name" value="ALCOHOL DEHYDROGENASE 2"/>
    <property type="match status" value="1"/>
</dbReference>
<dbReference type="Pfam" id="PF08240">
    <property type="entry name" value="ADH_N"/>
    <property type="match status" value="1"/>
</dbReference>
<dbReference type="Pfam" id="PF00107">
    <property type="entry name" value="ADH_zinc_N"/>
    <property type="match status" value="1"/>
</dbReference>
<dbReference type="SUPFAM" id="SSF50129">
    <property type="entry name" value="GroES-like"/>
    <property type="match status" value="2"/>
</dbReference>
<dbReference type="SUPFAM" id="SSF51735">
    <property type="entry name" value="NAD(P)-binding Rossmann-fold domains"/>
    <property type="match status" value="1"/>
</dbReference>
<dbReference type="PROSITE" id="PS00059">
    <property type="entry name" value="ADH_ZINC"/>
    <property type="match status" value="1"/>
</dbReference>
<accession>P28032</accession>
<comment type="catalytic activity">
    <reaction evidence="2">
        <text>a primary alcohol + NAD(+) = an aldehyde + NADH + H(+)</text>
        <dbReference type="Rhea" id="RHEA:10736"/>
        <dbReference type="ChEBI" id="CHEBI:15378"/>
        <dbReference type="ChEBI" id="CHEBI:15734"/>
        <dbReference type="ChEBI" id="CHEBI:17478"/>
        <dbReference type="ChEBI" id="CHEBI:57540"/>
        <dbReference type="ChEBI" id="CHEBI:57945"/>
        <dbReference type="EC" id="1.1.1.1"/>
    </reaction>
</comment>
<comment type="catalytic activity">
    <reaction evidence="2">
        <text>a secondary alcohol + NAD(+) = a ketone + NADH + H(+)</text>
        <dbReference type="Rhea" id="RHEA:10740"/>
        <dbReference type="ChEBI" id="CHEBI:15378"/>
        <dbReference type="ChEBI" id="CHEBI:17087"/>
        <dbReference type="ChEBI" id="CHEBI:35681"/>
        <dbReference type="ChEBI" id="CHEBI:57540"/>
        <dbReference type="ChEBI" id="CHEBI:57945"/>
        <dbReference type="EC" id="1.1.1.1"/>
    </reaction>
</comment>
<comment type="cofactor">
    <cofactor evidence="2">
        <name>Zn(2+)</name>
        <dbReference type="ChEBI" id="CHEBI:29105"/>
    </cofactor>
    <text evidence="2">Binds 2 Zn(2+) ions per subunit.</text>
</comment>
<comment type="subunit">
    <text evidence="2">Homodimer (By similarity). Homotetramer.</text>
</comment>
<comment type="subcellular location">
    <subcellularLocation>
        <location evidence="2">Cytoplasm</location>
    </subcellularLocation>
</comment>
<comment type="similarity">
    <text evidence="3">Belongs to the zinc-containing alcohol dehydrogenase family.</text>
</comment>
<sequence length="380" mass="41040">MSTTVGQVIRCKAAVAWEAGKPLVMEEVDVAPPQKMEVRLKILYTSLCHTDVYFWEAKGQNPVFPRILGHEAAGIVESVGEGVTDLAPGDHVLPVFTGECKDCAHCKSEESNMCSLLRINTDRGVMLNDGKSRFSINGNPIYHFVGTSTFSEYTVVHVGCVAKINPLAPLDKVCVLSCGISTGLGASLNVAKPTKGSSVAIFGLGAVGLAAAEGARIAGASRIIGVDLNASRFEQAKKFGVTEFVNPKDYSKPVQEVIAEMTDGGVDRSVECTGHIDAMISAFECVHDGWGVAVLVGVPHKEAVFKTHPLNFLNERTLKGTFFGNYKPRSDIPCVVEKYMNKELELEKFITHTLPFAEINKAFDLMLKGEGLRCIITMAD</sequence>
<name>ADH2_SOLLC</name>
<evidence type="ECO:0000250" key="1">
    <source>
        <dbReference type="UniProtKB" id="P00327"/>
    </source>
</evidence>
<evidence type="ECO:0000250" key="2">
    <source>
        <dbReference type="UniProtKB" id="P06525"/>
    </source>
</evidence>
<evidence type="ECO:0000305" key="3"/>
<reference key="1">
    <citation type="journal article" date="1993" name="Gene">
        <title>Isolation of a tomato alcohol dehydrogenase 2-encoding cDNA using phage-promoted antibody screening of a plasmid cDNA library.</title>
        <authorList>
            <person name="Genez A.L."/>
            <person name="Staraci L.C."/>
            <person name="Alexander D.C."/>
            <person name="Rejda V.M."/>
            <person name="Williamson V.M."/>
            <person name="Chase T. Jr."/>
            <person name="Williams B.G."/>
        </authorList>
    </citation>
    <scope>NUCLEOTIDE SEQUENCE</scope>
</reference>
<reference key="2">
    <citation type="journal article" date="1994" name="Plant Mol. Biol.">
        <title>Structure of the tomato Adh2 gene and Adh2 pseudogenes, and a study of Adh2 gene expression in fruit.</title>
        <authorList>
            <person name="Longhurst T."/>
            <person name="Lee E."/>
            <person name="Hinde R."/>
            <person name="Brady C."/>
            <person name="Speirs J."/>
        </authorList>
    </citation>
    <scope>NUCLEOTIDE SEQUENCE [GENOMIC DNA / MRNA]</scope>
    <source>
        <strain>cv. De Ruiter 83G38</strain>
    </source>
</reference>
<reference key="3">
    <citation type="journal article" date="1991" name="FEBS Lett.">
        <title>Tomato alcohol dehydrogenase. Expression during fruit ripening and under hypoxic conditions.</title>
        <authorList>
            <person name="van der Straeten D."/>
            <person name="Pousada R.A.R."/>
            <person name="Gielen J."/>
            <person name="van Montagu M."/>
        </authorList>
    </citation>
    <scope>NUCLEOTIDE SEQUENCE [MRNA] OF 252-380</scope>
    <source>
        <strain>cv. Orlando</strain>
    </source>
</reference>